<proteinExistence type="inferred from homology"/>
<protein>
    <recommendedName>
        <fullName>Mitochondrial protein import protein ZIM17</fullName>
    </recommendedName>
    <alternativeName>
        <fullName>Mitochondrial import inner membrane translocase subunit TIM15</fullName>
    </alternativeName>
    <alternativeName>
        <fullName>mtHsp70 escort protein 1</fullName>
    </alternativeName>
    <alternativeName>
        <fullName>mtHsp70-associated motor and chaperone protein TIM15/ZIM17</fullName>
        <shortName>MMC</shortName>
    </alternativeName>
</protein>
<reference key="1">
    <citation type="submission" date="2005-03" db="EMBL/GenBank/DDBJ databases">
        <title>Annotation of the Saccharomyces cerevisiae RM11-1a genome.</title>
        <authorList>
            <consortium name="The Broad Institute Genome Sequencing Platform"/>
            <person name="Birren B.W."/>
            <person name="Lander E.S."/>
            <person name="Galagan J.E."/>
            <person name="Nusbaum C."/>
            <person name="Devon K."/>
            <person name="Cuomo C."/>
            <person name="Jaffe D.B."/>
            <person name="Butler J."/>
            <person name="Alvarez P."/>
            <person name="Gnerre S."/>
            <person name="Grabherr M."/>
            <person name="Kleber M."/>
            <person name="Mauceli E.W."/>
            <person name="Brockman W."/>
            <person name="MacCallum I.A."/>
            <person name="Rounsley S."/>
            <person name="Young S.K."/>
            <person name="LaButti K."/>
            <person name="Pushparaj V."/>
            <person name="DeCaprio D."/>
            <person name="Crawford M."/>
            <person name="Koehrsen M."/>
            <person name="Engels R."/>
            <person name="Montgomery P."/>
            <person name="Pearson M."/>
            <person name="Howarth C."/>
            <person name="Larson L."/>
            <person name="Luoma S."/>
            <person name="White J."/>
            <person name="O'Leary S."/>
            <person name="Kodira C.D."/>
            <person name="Zeng Q."/>
            <person name="Yandava C."/>
            <person name="Alvarado L."/>
            <person name="Pratt S."/>
            <person name="Kruglyak L."/>
        </authorList>
    </citation>
    <scope>NUCLEOTIDE SEQUENCE [LARGE SCALE GENOMIC DNA]</scope>
    <source>
        <strain>RM11-1a</strain>
    </source>
</reference>
<evidence type="ECO:0000250" key="1"/>
<evidence type="ECO:0000255" key="2">
    <source>
        <dbReference type="PROSITE-ProRule" id="PRU00834"/>
    </source>
</evidence>
<evidence type="ECO:0000305" key="3"/>
<feature type="transit peptide" description="Mitochondrion" evidence="1">
    <location>
        <begin position="1"/>
        <end position="47"/>
    </location>
</feature>
<feature type="chain" id="PRO_0000377662" description="Mitochondrial protein import protein ZIM17">
    <location>
        <begin position="48"/>
        <end position="174"/>
    </location>
</feature>
<feature type="zinc finger region" description="DNL-type" evidence="2">
    <location>
        <begin position="64"/>
        <end position="159"/>
    </location>
</feature>
<feature type="binding site" evidence="2">
    <location>
        <position position="75"/>
    </location>
    <ligand>
        <name>Zn(2+)</name>
        <dbReference type="ChEBI" id="CHEBI:29105"/>
    </ligand>
</feature>
<feature type="binding site" evidence="2">
    <location>
        <position position="78"/>
    </location>
    <ligand>
        <name>Zn(2+)</name>
        <dbReference type="ChEBI" id="CHEBI:29105"/>
    </ligand>
</feature>
<feature type="binding site" evidence="2">
    <location>
        <position position="100"/>
    </location>
    <ligand>
        <name>Zn(2+)</name>
        <dbReference type="ChEBI" id="CHEBI:29105"/>
    </ligand>
</feature>
<feature type="binding site" evidence="2">
    <location>
        <position position="103"/>
    </location>
    <ligand>
        <name>Zn(2+)</name>
        <dbReference type="ChEBI" id="CHEBI:29105"/>
    </ligand>
</feature>
<organism>
    <name type="scientific">Saccharomyces cerevisiae (strain RM11-1a)</name>
    <name type="common">Baker's yeast</name>
    <dbReference type="NCBI Taxonomy" id="285006"/>
    <lineage>
        <taxon>Eukaryota</taxon>
        <taxon>Fungi</taxon>
        <taxon>Dikarya</taxon>
        <taxon>Ascomycota</taxon>
        <taxon>Saccharomycotina</taxon>
        <taxon>Saccharomycetes</taxon>
        <taxon>Saccharomycetales</taxon>
        <taxon>Saccharomycetaceae</taxon>
        <taxon>Saccharomyces</taxon>
    </lineage>
</organism>
<keyword id="KW-0143">Chaperone</keyword>
<keyword id="KW-0472">Membrane</keyword>
<keyword id="KW-0479">Metal-binding</keyword>
<keyword id="KW-0496">Mitochondrion</keyword>
<keyword id="KW-0999">Mitochondrion inner membrane</keyword>
<keyword id="KW-0653">Protein transport</keyword>
<keyword id="KW-0809">Transit peptide</keyword>
<keyword id="KW-0813">Transport</keyword>
<keyword id="KW-0862">Zinc</keyword>
<keyword id="KW-0863">Zinc-finger</keyword>
<sequence>MIPRTRTLLQSKIPITRYFARCWAPRVRYNVCRTLPAAALHTNIIAHNEVKKDDKKVHLGSFKVDKPKMMIAFTCKKCNTRSSHTMSKQAYEKGTVLISCPHCKVRHLIADHLKIFHDHHVTVEQLMKANGEQVSQDVGDLEFEDIPDSLKDVLGKYAKNNSENASQLPHPSQK</sequence>
<comment type="function">
    <text evidence="1">Involved in protein import into mitochondria. Acts as a Hsp70-specific chaperone that prevents self-aggregation of the matrix Hsp70 chaperones SSC1 (mtHSP70) and SSQ1, thereby maintaining their function in mitochondrial protein import and Fe/S protein biosynthesis. May act together with PAM18 as co-chaperone to facilitate recognition and folding of imported proteins by SSC1 in the mitochondrial matrix (By similarity).</text>
</comment>
<comment type="cofactor">
    <cofactor evidence="1">
        <name>Zn(2+)</name>
        <dbReference type="ChEBI" id="CHEBI:29105"/>
    </cofactor>
    <text evidence="1">Binds 1 zinc ion per subunit.</text>
</comment>
<comment type="subunit">
    <text evidence="1">Interacts with SSC1; binds to the nucleotide-free state as well as to the ADP- or ATP-bound state of SSC1.</text>
</comment>
<comment type="subcellular location">
    <subcellularLocation>
        <location evidence="1">Mitochondrion inner membrane</location>
        <topology evidence="1">Peripheral membrane protein</topology>
        <orientation evidence="1">Matrix side</orientation>
    </subcellularLocation>
    <text evidence="1">Soluble matrix protein loosely associated with the inner membrane.</text>
</comment>
<comment type="sequence caution" evidence="3">
    <conflict type="erroneous initiation">
        <sequence resource="EMBL-CDS" id="EDV12539"/>
    </conflict>
</comment>
<dbReference type="EMBL" id="CH408049">
    <property type="protein sequence ID" value="EDV12539.1"/>
    <property type="status" value="ALT_INIT"/>
    <property type="molecule type" value="Genomic_DNA"/>
</dbReference>
<dbReference type="SMR" id="B3LPE4"/>
<dbReference type="HOGENOM" id="CLU_093902_1_0_1"/>
<dbReference type="OrthoDB" id="39586at4893"/>
<dbReference type="Proteomes" id="UP000008335">
    <property type="component" value="Unassembled WGS sequence"/>
</dbReference>
<dbReference type="GO" id="GO:0005743">
    <property type="term" value="C:mitochondrial inner membrane"/>
    <property type="evidence" value="ECO:0007669"/>
    <property type="project" value="UniProtKB-SubCell"/>
</dbReference>
<dbReference type="GO" id="GO:0051087">
    <property type="term" value="F:protein-folding chaperone binding"/>
    <property type="evidence" value="ECO:0007669"/>
    <property type="project" value="TreeGrafter"/>
</dbReference>
<dbReference type="GO" id="GO:0008270">
    <property type="term" value="F:zinc ion binding"/>
    <property type="evidence" value="ECO:0007669"/>
    <property type="project" value="UniProtKB-KW"/>
</dbReference>
<dbReference type="GO" id="GO:0006457">
    <property type="term" value="P:protein folding"/>
    <property type="evidence" value="ECO:0007669"/>
    <property type="project" value="TreeGrafter"/>
</dbReference>
<dbReference type="GO" id="GO:0030150">
    <property type="term" value="P:protein import into mitochondrial matrix"/>
    <property type="evidence" value="ECO:0007669"/>
    <property type="project" value="TreeGrafter"/>
</dbReference>
<dbReference type="GO" id="GO:0050821">
    <property type="term" value="P:protein stabilization"/>
    <property type="evidence" value="ECO:0007669"/>
    <property type="project" value="TreeGrafter"/>
</dbReference>
<dbReference type="InterPro" id="IPR024158">
    <property type="entry name" value="Mt_import_TIM15"/>
</dbReference>
<dbReference type="InterPro" id="IPR007853">
    <property type="entry name" value="Znf_DNL-typ"/>
</dbReference>
<dbReference type="PANTHER" id="PTHR20922">
    <property type="entry name" value="DNL-TYPE ZINC FINGER PROTEIN"/>
    <property type="match status" value="1"/>
</dbReference>
<dbReference type="PANTHER" id="PTHR20922:SF13">
    <property type="entry name" value="DNL-TYPE ZINC FINGER PROTEIN"/>
    <property type="match status" value="1"/>
</dbReference>
<dbReference type="Pfam" id="PF05180">
    <property type="entry name" value="zf-DNL"/>
    <property type="match status" value="1"/>
</dbReference>
<dbReference type="PROSITE" id="PS51501">
    <property type="entry name" value="ZF_DNL"/>
    <property type="match status" value="1"/>
</dbReference>
<gene>
    <name type="primary">ZIM17</name>
    <name type="ORF">SCRG_03434</name>
</gene>
<accession>B3LPE4</accession>
<name>ZIM17_YEAS1</name>